<feature type="initiator methionine" description="Removed" evidence="4">
    <location>
        <position position="1"/>
    </location>
</feature>
<feature type="chain" id="PRO_0000073869" description="Allograft inflammatory factor 1">
    <location>
        <begin position="2"/>
        <end position="147"/>
    </location>
</feature>
<feature type="domain" description="EF-hand 1" evidence="5">
    <location>
        <begin position="45"/>
        <end position="80"/>
    </location>
</feature>
<feature type="domain" description="EF-hand 2; degenerate" evidence="7">
    <location>
        <begin position="81"/>
        <end position="115"/>
    </location>
</feature>
<feature type="region of interest" description="Disordered" evidence="6">
    <location>
        <begin position="127"/>
        <end position="147"/>
    </location>
</feature>
<feature type="binding site" evidence="7">
    <location>
        <position position="58"/>
    </location>
    <ligand>
        <name>Ca(2+)</name>
        <dbReference type="ChEBI" id="CHEBI:29108"/>
        <label>1</label>
    </ligand>
</feature>
<feature type="binding site" evidence="7">
    <location>
        <position position="60"/>
    </location>
    <ligand>
        <name>Ca(2+)</name>
        <dbReference type="ChEBI" id="CHEBI:29108"/>
        <label>1</label>
    </ligand>
</feature>
<feature type="binding site" evidence="7">
    <location>
        <position position="62"/>
    </location>
    <ligand>
        <name>Ca(2+)</name>
        <dbReference type="ChEBI" id="CHEBI:29108"/>
        <label>1</label>
    </ligand>
</feature>
<feature type="binding site" evidence="7">
    <location>
        <position position="64"/>
    </location>
    <ligand>
        <name>Ca(2+)</name>
        <dbReference type="ChEBI" id="CHEBI:29108"/>
        <label>1</label>
    </ligand>
</feature>
<feature type="binding site" evidence="7">
    <location>
        <position position="98"/>
    </location>
    <ligand>
        <name>Ca(2+)</name>
        <dbReference type="ChEBI" id="CHEBI:29108"/>
        <label>2</label>
    </ligand>
</feature>
<feature type="binding site" evidence="7">
    <location>
        <position position="100"/>
    </location>
    <ligand>
        <name>Ca(2+)</name>
        <dbReference type="ChEBI" id="CHEBI:29108"/>
        <label>2</label>
    </ligand>
</feature>
<feature type="binding site" evidence="7">
    <location>
        <position position="105"/>
    </location>
    <ligand>
        <name>Ca(2+)</name>
        <dbReference type="ChEBI" id="CHEBI:29108"/>
        <label>2</label>
    </ligand>
</feature>
<feature type="modified residue" description="N-acetylserine" evidence="4">
    <location>
        <position position="2"/>
    </location>
</feature>
<feature type="modified residue" description="N6-acetyllysine" evidence="3">
    <location>
        <position position="11"/>
    </location>
</feature>
<feature type="modified residue" description="Phosphoserine" evidence="3">
    <location>
        <position position="39"/>
    </location>
</feature>
<feature type="sequence conflict" description="In Ref. 3; BAA11533." evidence="7" ref="3">
    <original>SQSKDLQG</original>
    <variation>MKPEEISR</variation>
    <location>
        <begin position="2"/>
        <end position="9"/>
    </location>
</feature>
<evidence type="ECO:0000250" key="1"/>
<evidence type="ECO:0000250" key="2">
    <source>
        <dbReference type="UniProtKB" id="O70200"/>
    </source>
</evidence>
<evidence type="ECO:0000250" key="3">
    <source>
        <dbReference type="UniProtKB" id="P55008"/>
    </source>
</evidence>
<evidence type="ECO:0000250" key="4">
    <source>
        <dbReference type="UniProtKB" id="P81076"/>
    </source>
</evidence>
<evidence type="ECO:0000255" key="5">
    <source>
        <dbReference type="PROSITE-ProRule" id="PRU00448"/>
    </source>
</evidence>
<evidence type="ECO:0000256" key="6">
    <source>
        <dbReference type="SAM" id="MobiDB-lite"/>
    </source>
</evidence>
<evidence type="ECO:0000305" key="7"/>
<proteinExistence type="evidence at transcript level"/>
<organism>
    <name type="scientific">Rattus norvegicus</name>
    <name type="common">Rat</name>
    <dbReference type="NCBI Taxonomy" id="10116"/>
    <lineage>
        <taxon>Eukaryota</taxon>
        <taxon>Metazoa</taxon>
        <taxon>Chordata</taxon>
        <taxon>Craniata</taxon>
        <taxon>Vertebrata</taxon>
        <taxon>Euteleostomi</taxon>
        <taxon>Mammalia</taxon>
        <taxon>Eutheria</taxon>
        <taxon>Euarchontoglires</taxon>
        <taxon>Glires</taxon>
        <taxon>Rodentia</taxon>
        <taxon>Myomorpha</taxon>
        <taxon>Muroidea</taxon>
        <taxon>Muridae</taxon>
        <taxon>Murinae</taxon>
        <taxon>Rattus</taxon>
    </lineage>
</organism>
<protein>
    <recommendedName>
        <fullName>Allograft inflammatory factor 1</fullName>
        <shortName>AIF-1</shortName>
    </recommendedName>
    <alternativeName>
        <fullName>Ionized calcium-binding adapter molecule 1</fullName>
    </alternativeName>
    <alternativeName>
        <fullName>MRF-1</fullName>
    </alternativeName>
    <alternativeName>
        <fullName>Microglia response factor</fullName>
    </alternativeName>
</protein>
<gene>
    <name type="primary">Aif1</name>
    <name type="synonym">Iba1</name>
    <name type="synonym">Mrf1</name>
</gene>
<accession>P55009</accession>
<accession>P55007</accession>
<accession>P70491</accession>
<sequence length="147" mass="16827">MSQSKDLQGGKAFGLLKAQQEERLDGINKHFLDDPKYSSDEDLQSKLEAFKTKYMEFDLNGNGDIDIMSLKRMLEKLGVPKTHLELKKLIREVSSGSEETFSYSDFLRMMLGKRSAILRMILMYEEKNKEHQKPTGPPAKKAISELP</sequence>
<name>AIF1_RAT</name>
<dbReference type="EMBL" id="U17919">
    <property type="protein sequence ID" value="AAA80105.1"/>
    <property type="molecule type" value="mRNA"/>
</dbReference>
<dbReference type="EMBL" id="U33471">
    <property type="protein sequence ID" value="AAB06590.1"/>
    <property type="status" value="ALT_SEQ"/>
    <property type="molecule type" value="mRNA"/>
</dbReference>
<dbReference type="EMBL" id="D82069">
    <property type="protein sequence ID" value="BAA11533.1"/>
    <property type="molecule type" value="mRNA"/>
</dbReference>
<dbReference type="EMBL" id="AB000818">
    <property type="protein sequence ID" value="BAA19189.1"/>
    <property type="molecule type" value="mRNA"/>
</dbReference>
<dbReference type="EMBL" id="BX883046">
    <property type="protein sequence ID" value="CAE83999.1"/>
    <property type="molecule type" value="Genomic_DNA"/>
</dbReference>
<dbReference type="PIR" id="I55617">
    <property type="entry name" value="I55617"/>
</dbReference>
<dbReference type="PIR" id="JC4902">
    <property type="entry name" value="JC4902"/>
</dbReference>
<dbReference type="RefSeq" id="NP_058892.1">
    <property type="nucleotide sequence ID" value="NM_017196.3"/>
</dbReference>
<dbReference type="RefSeq" id="XP_006256127.1">
    <property type="nucleotide sequence ID" value="XM_006256065.2"/>
</dbReference>
<dbReference type="SMR" id="P55009"/>
<dbReference type="FunCoup" id="P55009">
    <property type="interactions" value="107"/>
</dbReference>
<dbReference type="STRING" id="10116.ENSRNOP00000001135"/>
<dbReference type="iPTMnet" id="P55009"/>
<dbReference type="PhosphoSitePlus" id="P55009"/>
<dbReference type="PaxDb" id="10116-ENSRNOP00000001135"/>
<dbReference type="GeneID" id="29427"/>
<dbReference type="KEGG" id="rno:29427"/>
<dbReference type="AGR" id="RGD:61924"/>
<dbReference type="CTD" id="199"/>
<dbReference type="RGD" id="61924">
    <property type="gene designation" value="Aif1"/>
</dbReference>
<dbReference type="VEuPathDB" id="HostDB:ENSRNOG00000000853"/>
<dbReference type="eggNOG" id="KOG0027">
    <property type="taxonomic scope" value="Eukaryota"/>
</dbReference>
<dbReference type="HOGENOM" id="CLU_134149_0_0_1"/>
<dbReference type="InParanoid" id="P55009"/>
<dbReference type="PRO" id="PR:P55009"/>
<dbReference type="Proteomes" id="UP000002494">
    <property type="component" value="Chromosome 20"/>
</dbReference>
<dbReference type="Bgee" id="ENSRNOG00000000853">
    <property type="expression patterns" value="Expressed in spleen and 20 other cell types or tissues"/>
</dbReference>
<dbReference type="ExpressionAtlas" id="P55009">
    <property type="expression patterns" value="baseline and differential"/>
</dbReference>
<dbReference type="GO" id="GO:0005884">
    <property type="term" value="C:actin filament"/>
    <property type="evidence" value="ECO:0000266"/>
    <property type="project" value="RGD"/>
</dbReference>
<dbReference type="GO" id="GO:0042995">
    <property type="term" value="C:cell projection"/>
    <property type="evidence" value="ECO:0000314"/>
    <property type="project" value="RGD"/>
</dbReference>
<dbReference type="GO" id="GO:0005737">
    <property type="term" value="C:cytoplasm"/>
    <property type="evidence" value="ECO:0000314"/>
    <property type="project" value="UniProtKB"/>
</dbReference>
<dbReference type="GO" id="GO:0005829">
    <property type="term" value="C:cytosol"/>
    <property type="evidence" value="ECO:0000250"/>
    <property type="project" value="UniProtKB"/>
</dbReference>
<dbReference type="GO" id="GO:0097386">
    <property type="term" value="C:glial cell projection"/>
    <property type="evidence" value="ECO:0000266"/>
    <property type="project" value="RGD"/>
</dbReference>
<dbReference type="GO" id="GO:0030027">
    <property type="term" value="C:lamellipodium"/>
    <property type="evidence" value="ECO:0000314"/>
    <property type="project" value="RGD"/>
</dbReference>
<dbReference type="GO" id="GO:0005634">
    <property type="term" value="C:nucleus"/>
    <property type="evidence" value="ECO:0000250"/>
    <property type="project" value="UniProtKB"/>
</dbReference>
<dbReference type="GO" id="GO:0043204">
    <property type="term" value="C:perikaryon"/>
    <property type="evidence" value="ECO:0000314"/>
    <property type="project" value="RGD"/>
</dbReference>
<dbReference type="GO" id="GO:0048471">
    <property type="term" value="C:perinuclear region of cytoplasm"/>
    <property type="evidence" value="ECO:0000266"/>
    <property type="project" value="RGD"/>
</dbReference>
<dbReference type="GO" id="GO:0001891">
    <property type="term" value="C:phagocytic cup"/>
    <property type="evidence" value="ECO:0000250"/>
    <property type="project" value="UniProtKB"/>
</dbReference>
<dbReference type="GO" id="GO:0001726">
    <property type="term" value="C:ruffle"/>
    <property type="evidence" value="ECO:0000266"/>
    <property type="project" value="RGD"/>
</dbReference>
<dbReference type="GO" id="GO:0032587">
    <property type="term" value="C:ruffle membrane"/>
    <property type="evidence" value="ECO:0000266"/>
    <property type="project" value="RGD"/>
</dbReference>
<dbReference type="GO" id="GO:0051015">
    <property type="term" value="F:actin filament binding"/>
    <property type="evidence" value="ECO:0000250"/>
    <property type="project" value="UniProtKB"/>
</dbReference>
<dbReference type="GO" id="GO:0005509">
    <property type="term" value="F:calcium ion binding"/>
    <property type="evidence" value="ECO:0000266"/>
    <property type="project" value="RGD"/>
</dbReference>
<dbReference type="GO" id="GO:0051764">
    <property type="term" value="P:actin crosslink formation"/>
    <property type="evidence" value="ECO:0000266"/>
    <property type="project" value="RGD"/>
</dbReference>
<dbReference type="GO" id="GO:0051017">
    <property type="term" value="P:actin filament bundle assembly"/>
    <property type="evidence" value="ECO:0000250"/>
    <property type="project" value="UniProtKB"/>
</dbReference>
<dbReference type="GO" id="GO:0030041">
    <property type="term" value="P:actin filament polymerization"/>
    <property type="evidence" value="ECO:0000250"/>
    <property type="project" value="UniProtKB"/>
</dbReference>
<dbReference type="GO" id="GO:0032870">
    <property type="term" value="P:cellular response to hormone stimulus"/>
    <property type="evidence" value="ECO:0000270"/>
    <property type="project" value="RGD"/>
</dbReference>
<dbReference type="GO" id="GO:0071447">
    <property type="term" value="P:cellular response to hydroperoxide"/>
    <property type="evidence" value="ECO:0000270"/>
    <property type="project" value="RGD"/>
</dbReference>
<dbReference type="GO" id="GO:0071222">
    <property type="term" value="P:cellular response to lipopolysaccharide"/>
    <property type="evidence" value="ECO:0000270"/>
    <property type="project" value="RGD"/>
</dbReference>
<dbReference type="GO" id="GO:0071315">
    <property type="term" value="P:cellular response to morphine"/>
    <property type="evidence" value="ECO:0000270"/>
    <property type="project" value="RGD"/>
</dbReference>
<dbReference type="GO" id="GO:0034599">
    <property type="term" value="P:cellular response to oxidative stress"/>
    <property type="evidence" value="ECO:0000266"/>
    <property type="project" value="RGD"/>
</dbReference>
<dbReference type="GO" id="GO:0071346">
    <property type="term" value="P:cellular response to type II interferon"/>
    <property type="evidence" value="ECO:0000270"/>
    <property type="project" value="UniProtKB"/>
</dbReference>
<dbReference type="GO" id="GO:0021549">
    <property type="term" value="P:cerebellum development"/>
    <property type="evidence" value="ECO:0000270"/>
    <property type="project" value="RGD"/>
</dbReference>
<dbReference type="GO" id="GO:0006954">
    <property type="term" value="P:inflammatory response"/>
    <property type="evidence" value="ECO:0000270"/>
    <property type="project" value="UniProtKB"/>
</dbReference>
<dbReference type="GO" id="GO:0042116">
    <property type="term" value="P:macrophage activation"/>
    <property type="evidence" value="ECO:0000303"/>
    <property type="project" value="UniProtKB"/>
</dbReference>
<dbReference type="GO" id="GO:0043066">
    <property type="term" value="P:negative regulation of apoptotic process"/>
    <property type="evidence" value="ECO:0000314"/>
    <property type="project" value="RGD"/>
</dbReference>
<dbReference type="GO" id="GO:0010629">
    <property type="term" value="P:negative regulation of gene expression"/>
    <property type="evidence" value="ECO:0000315"/>
    <property type="project" value="RGD"/>
</dbReference>
<dbReference type="GO" id="GO:0071672">
    <property type="term" value="P:negative regulation of smooth muscle cell chemotaxis"/>
    <property type="evidence" value="ECO:0000266"/>
    <property type="project" value="RGD"/>
</dbReference>
<dbReference type="GO" id="GO:0048662">
    <property type="term" value="P:negative regulation of smooth muscle cell proliferation"/>
    <property type="evidence" value="ECO:0000266"/>
    <property type="project" value="RGD"/>
</dbReference>
<dbReference type="GO" id="GO:0030046">
    <property type="term" value="P:parallel actin filament bundle assembly"/>
    <property type="evidence" value="ECO:0000266"/>
    <property type="project" value="RGD"/>
</dbReference>
<dbReference type="GO" id="GO:0006911">
    <property type="term" value="P:phagocytosis, engulfment"/>
    <property type="evidence" value="ECO:0000250"/>
    <property type="project" value="UniProtKB"/>
</dbReference>
<dbReference type="GO" id="GO:0030335">
    <property type="term" value="P:positive regulation of cell migration"/>
    <property type="evidence" value="ECO:0000314"/>
    <property type="project" value="RGD"/>
</dbReference>
<dbReference type="GO" id="GO:0008284">
    <property type="term" value="P:positive regulation of cell population proliferation"/>
    <property type="evidence" value="ECO:0000266"/>
    <property type="project" value="RGD"/>
</dbReference>
<dbReference type="GO" id="GO:0032722">
    <property type="term" value="P:positive regulation of chemokine production"/>
    <property type="evidence" value="ECO:0000266"/>
    <property type="project" value="RGD"/>
</dbReference>
<dbReference type="GO" id="GO:0050921">
    <property type="term" value="P:positive regulation of chemotaxis"/>
    <property type="evidence" value="ECO:0000266"/>
    <property type="project" value="RGD"/>
</dbReference>
<dbReference type="GO" id="GO:0090271">
    <property type="term" value="P:positive regulation of fibroblast growth factor production"/>
    <property type="evidence" value="ECO:0000266"/>
    <property type="project" value="RGD"/>
</dbReference>
<dbReference type="GO" id="GO:1900087">
    <property type="term" value="P:positive regulation of G1/S transition of mitotic cell cycle"/>
    <property type="evidence" value="ECO:0000250"/>
    <property type="project" value="UniProtKB"/>
</dbReference>
<dbReference type="GO" id="GO:0032755">
    <property type="term" value="P:positive regulation of interleukin-6 production"/>
    <property type="evidence" value="ECO:0000266"/>
    <property type="project" value="RGD"/>
</dbReference>
<dbReference type="GO" id="GO:0090026">
    <property type="term" value="P:positive regulation of monocyte chemotaxis"/>
    <property type="evidence" value="ECO:0000250"/>
    <property type="project" value="UniProtKB"/>
</dbReference>
<dbReference type="GO" id="GO:0071677">
    <property type="term" value="P:positive regulation of mononuclear cell migration"/>
    <property type="evidence" value="ECO:0000266"/>
    <property type="project" value="RGD"/>
</dbReference>
<dbReference type="GO" id="GO:0014739">
    <property type="term" value="P:positive regulation of muscle hyperplasia"/>
    <property type="evidence" value="ECO:0000315"/>
    <property type="project" value="RGD"/>
</dbReference>
<dbReference type="GO" id="GO:0045429">
    <property type="term" value="P:positive regulation of nitric oxide biosynthetic process"/>
    <property type="evidence" value="ECO:0000314"/>
    <property type="project" value="RGD"/>
</dbReference>
<dbReference type="GO" id="GO:0071673">
    <property type="term" value="P:positive regulation of smooth muscle cell chemotaxis"/>
    <property type="evidence" value="ECO:0000250"/>
    <property type="project" value="UniProtKB"/>
</dbReference>
<dbReference type="GO" id="GO:0048661">
    <property type="term" value="P:positive regulation of smooth muscle cell proliferation"/>
    <property type="evidence" value="ECO:0000315"/>
    <property type="project" value="RGD"/>
</dbReference>
<dbReference type="GO" id="GO:2000406">
    <property type="term" value="P:positive regulation of T cell migration"/>
    <property type="evidence" value="ECO:0000250"/>
    <property type="project" value="UniProtKB"/>
</dbReference>
<dbReference type="GO" id="GO:0042102">
    <property type="term" value="P:positive regulation of T cell proliferation"/>
    <property type="evidence" value="ECO:0000250"/>
    <property type="project" value="UniProtKB"/>
</dbReference>
<dbReference type="GO" id="GO:0016601">
    <property type="term" value="P:Rac protein signal transduction"/>
    <property type="evidence" value="ECO:0000250"/>
    <property type="project" value="UniProtKB"/>
</dbReference>
<dbReference type="GO" id="GO:0048678">
    <property type="term" value="P:response to axon injury"/>
    <property type="evidence" value="ECO:0000270"/>
    <property type="project" value="RGD"/>
</dbReference>
<dbReference type="GO" id="GO:0034097">
    <property type="term" value="P:response to cytokine"/>
    <property type="evidence" value="ECO:0000270"/>
    <property type="project" value="RGD"/>
</dbReference>
<dbReference type="GO" id="GO:0051602">
    <property type="term" value="P:response to electrical stimulus"/>
    <property type="evidence" value="ECO:0000270"/>
    <property type="project" value="RGD"/>
</dbReference>
<dbReference type="GO" id="GO:0051384">
    <property type="term" value="P:response to glucocorticoid"/>
    <property type="evidence" value="ECO:0000270"/>
    <property type="project" value="RGD"/>
</dbReference>
<dbReference type="GO" id="GO:0097178">
    <property type="term" value="P:ruffle assembly"/>
    <property type="evidence" value="ECO:0000250"/>
    <property type="project" value="UniProtKB"/>
</dbReference>
<dbReference type="FunFam" id="1.10.238.10:FF:000106">
    <property type="entry name" value="Allograft inflammatory factor 1"/>
    <property type="match status" value="1"/>
</dbReference>
<dbReference type="Gene3D" id="1.10.238.10">
    <property type="entry name" value="EF-hand"/>
    <property type="match status" value="1"/>
</dbReference>
<dbReference type="InterPro" id="IPR049025">
    <property type="entry name" value="AIF-1_EF_pair"/>
</dbReference>
<dbReference type="InterPro" id="IPR042433">
    <property type="entry name" value="AIF1/AIF1L"/>
</dbReference>
<dbReference type="InterPro" id="IPR011992">
    <property type="entry name" value="EF-hand-dom_pair"/>
</dbReference>
<dbReference type="InterPro" id="IPR002048">
    <property type="entry name" value="EF_hand_dom"/>
</dbReference>
<dbReference type="PANTHER" id="PTHR10356:SF4">
    <property type="entry name" value="ALLOGRAFT INFLAMMATORY FACTOR 1"/>
    <property type="match status" value="1"/>
</dbReference>
<dbReference type="PANTHER" id="PTHR10356">
    <property type="entry name" value="ALLOGRAFT INFLAMMATORY FACTOR-1"/>
    <property type="match status" value="1"/>
</dbReference>
<dbReference type="Pfam" id="PF21008">
    <property type="entry name" value="AIF-1"/>
    <property type="match status" value="1"/>
</dbReference>
<dbReference type="SUPFAM" id="SSF47473">
    <property type="entry name" value="EF-hand"/>
    <property type="match status" value="1"/>
</dbReference>
<dbReference type="PROSITE" id="PS50222">
    <property type="entry name" value="EF_HAND_2"/>
    <property type="match status" value="1"/>
</dbReference>
<keyword id="KW-0007">Acetylation</keyword>
<keyword id="KW-0009">Actin-binding</keyword>
<keyword id="KW-0106">Calcium</keyword>
<keyword id="KW-1003">Cell membrane</keyword>
<keyword id="KW-0966">Cell projection</keyword>
<keyword id="KW-0963">Cytoplasm</keyword>
<keyword id="KW-0206">Cytoskeleton</keyword>
<keyword id="KW-0472">Membrane</keyword>
<keyword id="KW-0479">Metal-binding</keyword>
<keyword id="KW-0597">Phosphoprotein</keyword>
<keyword id="KW-1185">Reference proteome</keyword>
<keyword id="KW-0677">Repeat</keyword>
<comment type="function">
    <text evidence="1">Actin-binding protein that enhances membrane ruffling and RAC activation. Enhances the actin-bundling activity of LCP1. Binds calcium. Plays a role in RAC signaling and in phagocytosis. May play an role in macrophage activation and function. Promotes the proliferation of vascular smooth muscle cells and of T-lymphocytes. Enhances lymphocyte migration. Plays a role in vascular inflammation (By similarity).</text>
</comment>
<comment type="subunit">
    <text evidence="1 7">Homodimer (Potential). Monomer. Interacts with LCP1 (By similarity).</text>
</comment>
<comment type="subcellular location">
    <subcellularLocation>
        <location evidence="2">Cytoplasm</location>
        <location evidence="2">Cytoskeleton</location>
    </subcellularLocation>
    <subcellularLocation>
        <location evidence="2">Cell projection</location>
        <location evidence="2">Ruffle membrane</location>
        <topology evidence="2">Peripheral membrane protein</topology>
        <orientation evidence="2">Cytoplasmic side</orientation>
    </subcellularLocation>
    <subcellularLocation>
        <location evidence="2">Cell projection</location>
        <location evidence="2">Phagocytic cup</location>
    </subcellularLocation>
    <text evidence="2">Associated with the actin cytoskeleton at membrane ruffles and at sites of phagocytosis.</text>
</comment>
<comment type="tissue specificity">
    <text>Cardiac allograft, spleen and testis. Expressed by inflammatory cells (macrophages and neutrophils).</text>
</comment>
<comment type="developmental stage">
    <text>Expressed early and persistently in chronically rejecting cardiac allografts but is absent in cardiac syngrafts and host hearts. In the embryonic cerebellum, expression peaks at day 7.</text>
</comment>
<comment type="induction">
    <text>By interferon gamma.</text>
</comment>
<comment type="sequence caution" evidence="7">
    <conflict type="frameshift">
        <sequence resource="EMBL-CDS" id="AAB06590"/>
    </conflict>
</comment>
<comment type="sequence caution" evidence="7">
    <conflict type="miscellaneous discrepancy">
        <sequence resource="EMBL-CDS" id="AAB06590"/>
    </conflict>
    <text>Intron retention.</text>
</comment>
<reference key="1">
    <citation type="journal article" date="1995" name="J. Clin. Invest.">
        <title>Cloning and characterization of allograft inflammatory factor-1: a novel macrophage factor identified in rat cardiac allografts with chronic rejection.</title>
        <authorList>
            <person name="Utans U."/>
            <person name="Arceci R.J."/>
            <person name="Yamashita Y."/>
            <person name="Russell M.E."/>
        </authorList>
    </citation>
    <scope>NUCLEOTIDE SEQUENCE [MRNA]</scope>
    <source>
        <strain>Lewis</strain>
        <tissue>Heart</tissue>
    </source>
</reference>
<reference key="2">
    <citation type="journal article" date="1995" name="Lab. Invest.">
        <title>Use of differential display to identify differentially expressed mRNAs induced by rat carotid artery balloon angioplasty.</title>
        <authorList>
            <person name="Autieri M.V."/>
            <person name="Feuerstein G.Z."/>
            <person name="Yue T.-L."/>
            <person name="Ohlstein E.H."/>
            <person name="Douglas S.A."/>
        </authorList>
    </citation>
    <scope>NUCLEOTIDE SEQUENCE [MRNA]</scope>
    <source>
        <strain>Wistar</strain>
        <tissue>Testis</tissue>
    </source>
</reference>
<reference key="3">
    <citation type="journal article" date="1996" name="Biochem. Biophys. Res. Commun.">
        <title>A novel gene iba1 in the major histocompatibility complex class III region encoding an EF hand protein expressed in a monocytic lineage.</title>
        <authorList>
            <person name="Imai Y."/>
            <person name="Ibata I."/>
            <person name="Ito D."/>
            <person name="Ohsawa K."/>
            <person name="Kohsaka S."/>
        </authorList>
    </citation>
    <scope>NUCLEOTIDE SEQUENCE [MRNA]</scope>
    <source>
        <strain>Wistar</strain>
        <tissue>Testis</tissue>
    </source>
</reference>
<reference key="4">
    <citation type="journal article" date="1998" name="J. Neurosci.">
        <title>Upregulation of a new microglial gene, mrf-1, in response to programmed neuronal cell death and degeneration.</title>
        <authorList>
            <person name="Tanaka S."/>
            <person name="Suzuki K."/>
            <person name="Watanabe M."/>
            <person name="Matsuda A."/>
            <person name="Tone S."/>
            <person name="Koike T."/>
        </authorList>
    </citation>
    <scope>NUCLEOTIDE SEQUENCE [MRNA]</scope>
</reference>
<reference key="5">
    <citation type="journal article" date="2004" name="Genome Res.">
        <title>The genomic sequence and comparative analysis of the rat major histocompatibility complex.</title>
        <authorList>
            <person name="Hurt P."/>
            <person name="Walter L."/>
            <person name="Sudbrak R."/>
            <person name="Klages S."/>
            <person name="Mueller I."/>
            <person name="Shiina T."/>
            <person name="Inoko H."/>
            <person name="Lehrach H."/>
            <person name="Guenther E."/>
            <person name="Reinhardt R."/>
            <person name="Himmelbauer H."/>
        </authorList>
    </citation>
    <scope>NUCLEOTIDE SEQUENCE [LARGE SCALE GENOMIC DNA]</scope>
    <source>
        <strain>Brown Norway</strain>
    </source>
</reference>